<reference key="1">
    <citation type="journal article" date="1993" name="Nucleic Acids Res.">
        <title>Analysis of the Escherichia coli genome. III. DNA sequence of the region from 87.2 to 89.2 minutes.</title>
        <authorList>
            <person name="Plunkett G. III"/>
            <person name="Burland V."/>
            <person name="Daniels D.L."/>
            <person name="Blattner F.R."/>
        </authorList>
    </citation>
    <scope>NUCLEOTIDE SEQUENCE [LARGE SCALE GENOMIC DNA]</scope>
    <source>
        <strain>K12 / MG1655 / ATCC 47076</strain>
    </source>
</reference>
<reference key="2">
    <citation type="journal article" date="1997" name="Science">
        <title>The complete genome sequence of Escherichia coli K-12.</title>
        <authorList>
            <person name="Blattner F.R."/>
            <person name="Plunkett G. III"/>
            <person name="Bloch C.A."/>
            <person name="Perna N.T."/>
            <person name="Burland V."/>
            <person name="Riley M."/>
            <person name="Collado-Vides J."/>
            <person name="Glasner J.D."/>
            <person name="Rode C.K."/>
            <person name="Mayhew G.F."/>
            <person name="Gregor J."/>
            <person name="Davis N.W."/>
            <person name="Kirkpatrick H.A."/>
            <person name="Goeden M.A."/>
            <person name="Rose D.J."/>
            <person name="Mau B."/>
            <person name="Shao Y."/>
        </authorList>
    </citation>
    <scope>NUCLEOTIDE SEQUENCE [LARGE SCALE GENOMIC DNA]</scope>
    <source>
        <strain>K12 / MG1655 / ATCC 47076</strain>
    </source>
</reference>
<reference key="3">
    <citation type="journal article" date="2006" name="Mol. Syst. Biol.">
        <title>Highly accurate genome sequences of Escherichia coli K-12 strains MG1655 and W3110.</title>
        <authorList>
            <person name="Hayashi K."/>
            <person name="Morooka N."/>
            <person name="Yamamoto Y."/>
            <person name="Fujita K."/>
            <person name="Isono K."/>
            <person name="Choi S."/>
            <person name="Ohtsubo E."/>
            <person name="Baba T."/>
            <person name="Wanner B.L."/>
            <person name="Mori H."/>
            <person name="Horiuchi T."/>
        </authorList>
    </citation>
    <scope>NUCLEOTIDE SEQUENCE [LARGE SCALE GENOMIC DNA]</scope>
    <source>
        <strain>K12 / W3110 / ATCC 27325 / DSM 5911</strain>
    </source>
</reference>
<reference key="4">
    <citation type="journal article" date="2014" name="Nature">
        <title>Sulphoglycolysis in Escherichia coli K-12 closes a gap in the biogeochemical sulphur cycle.</title>
        <authorList>
            <person name="Denger K."/>
            <person name="Weiss M."/>
            <person name="Felux A.K."/>
            <person name="Schneider A."/>
            <person name="Mayer C."/>
            <person name="Spiteller D."/>
            <person name="Huhn T."/>
            <person name="Cook A.M."/>
            <person name="Schleheck D."/>
        </authorList>
    </citation>
    <scope>FUNCTION</scope>
    <scope>CATALYTIC ACTIVITY</scope>
    <scope>INDUCTION</scope>
    <scope>DISRUPTION PHENOTYPE</scope>
    <scope>IDENTIFICATION BY MASS SPECTROMETRY</scope>
    <source>
        <strain>K12</strain>
    </source>
</reference>
<reference key="5">
    <citation type="journal article" date="2021" name="ACS Cent. Sci.">
        <title>Molecular Basis of Sulfosugar Selectivity in Sulfoglycolysis.</title>
        <authorList>
            <person name="Sharma M."/>
            <person name="Abayakoon P."/>
            <person name="Epa R."/>
            <person name="Jin Y."/>
            <person name="Lingford J.P."/>
            <person name="Shimada T."/>
            <person name="Nakano M."/>
            <person name="Mui J.W."/>
            <person name="Ishihama A."/>
            <person name="Goddard-Borger E.D."/>
            <person name="Davies G.J."/>
            <person name="Williams S.J."/>
        </authorList>
    </citation>
    <scope>FUNCTION</scope>
    <scope>CATALYTIC ACTIVITY</scope>
    <scope>BIOPHYSICOCHEMICAL PROPERTIES</scope>
    <scope>ACTIVE SITE</scope>
</reference>
<reference evidence="9" key="6">
    <citation type="journal article" date="2008" name="J. Mol. Biol.">
        <title>Crystal structure of YihS in complex with D-mannose: structural annotation of Escherichia coli and Salmonella enterica yihS-encoded proteins to an aldose-ketose isomerase.</title>
        <authorList>
            <person name="Itoh T."/>
            <person name="Mikami B."/>
            <person name="Hashimoto W."/>
            <person name="Murata K."/>
        </authorList>
    </citation>
    <scope>X-RAY CRYSTALLOGRAPHY (2.50 ANGSTROMS)</scope>
    <scope>FUNCTION AS AN ISOMERASE</scope>
    <scope>ACTIVITY REGULATION</scope>
    <scope>BIOPHYSICOCHEMICAL PROPERTIES</scope>
    <scope>SUBUNIT</scope>
    <scope>ACTIVE SITES</scope>
    <scope>MUTAGENESIS OF ARG-55; HIS-176; HIS-248; GLU-251; GLU-320 AND HIS-383</scope>
    <source>
        <strain>K12 / MG1655 / ATCC 47076</strain>
    </source>
</reference>
<gene>
    <name type="primary">yihS</name>
    <name type="ordered locus">b3880</name>
    <name type="ordered locus">JW5569</name>
</gene>
<name>SQUS_ECOLI</name>
<keyword id="KW-0002">3D-structure</keyword>
<keyword id="KW-0119">Carbohydrate metabolism</keyword>
<keyword id="KW-0413">Isomerase</keyword>
<keyword id="KW-1185">Reference proteome</keyword>
<comment type="function">
    <text evidence="2 3 4">Catalyzes the isomerization of sulfoquinovose (SQ) to 6-deoxy-6-sulfo-D-fructose (SF) (PubMed:24463506, PubMed:33791429). Can also catalyze the interconversion of SQ and sulforhamnose (SR) (PubMed:33791429). Has a clear preference for beta-SQ and little-to-no activity on alpha-SQ (PubMed:33791429). In vitro, can also catalyze the interconversion of mannose, fructose and glucose, or lyxose and xylulose, but has extremely low activity with glucose (PubMed:18328504).</text>
</comment>
<comment type="catalytic activity">
    <reaction evidence="1 3 4">
        <text>6-sulfo-beta-D-quinovose = 6-deoxy-6-sulfo-D-fructose</text>
        <dbReference type="Rhea" id="RHEA:40439"/>
        <dbReference type="ChEBI" id="CHEBI:77133"/>
        <dbReference type="ChEBI" id="CHEBI:142957"/>
        <dbReference type="EC" id="5.3.1.31"/>
    </reaction>
    <physiologicalReaction direction="left-to-right" evidence="1 3 4">
        <dbReference type="Rhea" id="RHEA:40440"/>
    </physiologicalReaction>
</comment>
<comment type="catalytic activity">
    <reaction evidence="4">
        <text>6-sulfo-beta-D-quinovose = 6-sulfo-D-rhamnose</text>
        <dbReference type="Rhea" id="RHEA:70707"/>
        <dbReference type="ChEBI" id="CHEBI:142957"/>
        <dbReference type="ChEBI" id="CHEBI:190019"/>
        <dbReference type="EC" id="5.3.1.31"/>
    </reaction>
</comment>
<comment type="activity regulation">
    <text evidence="2">Significantly inhibited by Cu(2+), Fe(3+) and Co(2+). Partially inhibited by Mg(2+), Ca(2+) and Mn(2+). Also inhibited by ATP, ADP, dATP, TTP and GTP.</text>
</comment>
<comment type="biophysicochemical properties">
    <kinetics>
        <KM evidence="4">1.89 mM for sulfoquinovose</KM>
        <KM evidence="2">108 mM for D-mannose</KM>
        <KM evidence="2">276 mM for D-fructose</KM>
        <KM evidence="2">405 mM for D-lyxose</KM>
        <KM evidence="2">163 mM for D-xylulose</KM>
        <text evidence="2 4">kcat is 79 sec(-1) for the formation of SF from SQ (PubMed:33791429). kcat is 25.3 sec(-1) for D-mannose. kcat is 22.2 sec(-1) for D-fructose. kcat is 13.5 sec(-1) for D-lyxose. kcat is 10.3 sec(-1) for D-xylulose (PubMed:18328504).</text>
    </kinetics>
    <phDependence>
        <text evidence="2">Optimum pH is 7.</text>
    </phDependence>
    <temperatureDependence>
        <text evidence="2">Optimum temperature is 47 degrees Celsius.</text>
    </temperatureDependence>
</comment>
<comment type="subunit">
    <text evidence="1 2">Homohexamer.</text>
</comment>
<comment type="induction">
    <text evidence="3">Induced during growth with sulfoquinovose.</text>
</comment>
<comment type="disruption phenotype">
    <text evidence="3">Mutant fails to grow on sulfoquinovose as a sole carbon source.</text>
</comment>
<comment type="similarity">
    <text evidence="1">Belongs to the N-acylglucosamine 2-epimerase family.</text>
</comment>
<comment type="sequence caution" evidence="6">
    <conflict type="erroneous initiation">
        <sequence resource="EMBL-CDS" id="AAB03013"/>
    </conflict>
    <text>Extended N-terminus.</text>
</comment>
<protein>
    <recommendedName>
        <fullName evidence="1 6">Sulfoquinovose isomerase</fullName>
        <shortName evidence="1 5">SQ isomerase</shortName>
        <ecNumber evidence="1 3 4">5.3.1.31</ecNumber>
    </recommendedName>
    <alternativeName>
        <fullName evidence="5">Sulfoquinovose-sulfofructose isomerase</fullName>
        <shortName evidence="5">SQ-SF isomerase</shortName>
    </alternativeName>
</protein>
<accession>P32140</accession>
<accession>Q2M8H7</accession>
<evidence type="ECO:0000255" key="1">
    <source>
        <dbReference type="HAMAP-Rule" id="MF_00998"/>
    </source>
</evidence>
<evidence type="ECO:0000269" key="2">
    <source>
    </source>
</evidence>
<evidence type="ECO:0000269" key="3">
    <source>
    </source>
</evidence>
<evidence type="ECO:0000269" key="4">
    <source>
    </source>
</evidence>
<evidence type="ECO:0000303" key="5">
    <source>
    </source>
</evidence>
<evidence type="ECO:0000305" key="6"/>
<evidence type="ECO:0000305" key="7">
    <source>
    </source>
</evidence>
<evidence type="ECO:0000305" key="8">
    <source>
    </source>
</evidence>
<evidence type="ECO:0007744" key="9">
    <source>
        <dbReference type="PDB" id="2RGK"/>
    </source>
</evidence>
<evidence type="ECO:0007829" key="10">
    <source>
        <dbReference type="PDB" id="2RGK"/>
    </source>
</evidence>
<dbReference type="EC" id="5.3.1.31" evidence="1 3 4"/>
<dbReference type="EMBL" id="L19201">
    <property type="protein sequence ID" value="AAB03013.1"/>
    <property type="status" value="ALT_INIT"/>
    <property type="molecule type" value="Genomic_DNA"/>
</dbReference>
<dbReference type="EMBL" id="U00096">
    <property type="protein sequence ID" value="AAD13442.2"/>
    <property type="molecule type" value="Genomic_DNA"/>
</dbReference>
<dbReference type="EMBL" id="AP009048">
    <property type="protein sequence ID" value="BAE77429.1"/>
    <property type="molecule type" value="Genomic_DNA"/>
</dbReference>
<dbReference type="PIR" id="S40824">
    <property type="entry name" value="S40824"/>
</dbReference>
<dbReference type="RefSeq" id="NP_418316.4">
    <property type="nucleotide sequence ID" value="NC_000913.3"/>
</dbReference>
<dbReference type="RefSeq" id="WP_000870916.1">
    <property type="nucleotide sequence ID" value="NZ_STEB01000017.1"/>
</dbReference>
<dbReference type="PDB" id="2RGK">
    <property type="method" value="X-ray"/>
    <property type="resolution" value="2.50 A"/>
    <property type="chains" value="A/B/C/D/E/F=1-413"/>
</dbReference>
<dbReference type="PDBsum" id="2RGK"/>
<dbReference type="SMR" id="P32140"/>
<dbReference type="BioGRID" id="4262638">
    <property type="interactions" value="6"/>
</dbReference>
<dbReference type="FunCoup" id="P32140">
    <property type="interactions" value="22"/>
</dbReference>
<dbReference type="STRING" id="511145.b3880"/>
<dbReference type="PaxDb" id="511145-b3880"/>
<dbReference type="EnsemblBacteria" id="AAD13442">
    <property type="protein sequence ID" value="AAD13442"/>
    <property type="gene ID" value="b3880"/>
</dbReference>
<dbReference type="GeneID" id="75204551"/>
<dbReference type="GeneID" id="948374"/>
<dbReference type="KEGG" id="ecj:JW5569"/>
<dbReference type="KEGG" id="eco:b3880"/>
<dbReference type="KEGG" id="ecoc:C3026_20975"/>
<dbReference type="PATRIC" id="fig|1411691.4.peg.2831"/>
<dbReference type="EchoBASE" id="EB1791"/>
<dbReference type="eggNOG" id="COG2942">
    <property type="taxonomic scope" value="Bacteria"/>
</dbReference>
<dbReference type="HOGENOM" id="CLU_042253_0_0_6"/>
<dbReference type="InParanoid" id="P32140"/>
<dbReference type="OMA" id="GFWKCPY"/>
<dbReference type="OrthoDB" id="9806359at2"/>
<dbReference type="PhylomeDB" id="P32140"/>
<dbReference type="BioCyc" id="EcoCyc:EG11845-MONOMER"/>
<dbReference type="BioCyc" id="MetaCyc:EG11845-MONOMER"/>
<dbReference type="EvolutionaryTrace" id="P32140"/>
<dbReference type="PRO" id="PR:P32140"/>
<dbReference type="Proteomes" id="UP000000625">
    <property type="component" value="Chromosome"/>
</dbReference>
<dbReference type="GO" id="GO:0042802">
    <property type="term" value="F:identical protein binding"/>
    <property type="evidence" value="ECO:0000314"/>
    <property type="project" value="EcoCyc"/>
</dbReference>
<dbReference type="GO" id="GO:0050089">
    <property type="term" value="F:mannose isomerase activity"/>
    <property type="evidence" value="ECO:0000314"/>
    <property type="project" value="EcoCyc"/>
</dbReference>
<dbReference type="GO" id="GO:0061593">
    <property type="term" value="F:sulfoquinovose isomerase activity"/>
    <property type="evidence" value="ECO:0000314"/>
    <property type="project" value="EcoCyc"/>
</dbReference>
<dbReference type="GO" id="GO:1902777">
    <property type="term" value="P:6-sulfoquinovose(1-) catabolic process"/>
    <property type="evidence" value="ECO:0000315"/>
    <property type="project" value="EcoCyc"/>
</dbReference>
<dbReference type="GO" id="GO:0061720">
    <property type="term" value="P:6-sulfoquinovose(1-) catabolic process to glycerone phosphate and 3-sulfolactaldehyde"/>
    <property type="evidence" value="ECO:0000315"/>
    <property type="project" value="EcoCyc"/>
</dbReference>
<dbReference type="GO" id="GO:0005975">
    <property type="term" value="P:carbohydrate metabolic process"/>
    <property type="evidence" value="ECO:0007669"/>
    <property type="project" value="InterPro"/>
</dbReference>
<dbReference type="GO" id="GO:0034214">
    <property type="term" value="P:protein hexamerization"/>
    <property type="evidence" value="ECO:0000314"/>
    <property type="project" value="EcoCyc"/>
</dbReference>
<dbReference type="CDD" id="cd00249">
    <property type="entry name" value="AGE"/>
    <property type="match status" value="1"/>
</dbReference>
<dbReference type="FunFam" id="1.50.10.10:FF:000014">
    <property type="entry name" value="Sulfoquinovose isomerase"/>
    <property type="match status" value="1"/>
</dbReference>
<dbReference type="Gene3D" id="1.50.10.10">
    <property type="match status" value="1"/>
</dbReference>
<dbReference type="HAMAP" id="MF_00998">
    <property type="entry name" value="SQ_isomerase"/>
    <property type="match status" value="1"/>
</dbReference>
<dbReference type="InterPro" id="IPR008928">
    <property type="entry name" value="6-hairpin_glycosidase_sf"/>
</dbReference>
<dbReference type="InterPro" id="IPR012341">
    <property type="entry name" value="6hp_glycosidase-like_sf"/>
</dbReference>
<dbReference type="InterPro" id="IPR010819">
    <property type="entry name" value="AGE/CE"/>
</dbReference>
<dbReference type="InterPro" id="IPR034116">
    <property type="entry name" value="AGE_dom"/>
</dbReference>
<dbReference type="InterPro" id="IPR030875">
    <property type="entry name" value="SQ_isomerase"/>
</dbReference>
<dbReference type="PANTHER" id="PTHR15108">
    <property type="entry name" value="N-ACYLGLUCOSAMINE-2-EPIMERASE"/>
    <property type="match status" value="1"/>
</dbReference>
<dbReference type="Pfam" id="PF07221">
    <property type="entry name" value="GlcNAc_2-epim"/>
    <property type="match status" value="1"/>
</dbReference>
<dbReference type="SUPFAM" id="SSF48208">
    <property type="entry name" value="Six-hairpin glycosidases"/>
    <property type="match status" value="1"/>
</dbReference>
<feature type="chain" id="PRO_0000208954" description="Sulfoquinovose isomerase">
    <location>
        <begin position="1"/>
        <end position="413"/>
    </location>
</feature>
<feature type="active site" description="Proton donor/acceptor" evidence="1 7 8">
    <location>
        <position position="248"/>
    </location>
</feature>
<feature type="active site" description="Proton donor/acceptor" evidence="1 7 8">
    <location>
        <position position="383"/>
    </location>
</feature>
<feature type="binding site" evidence="1">
    <location>
        <position position="55"/>
    </location>
    <ligand>
        <name>6-sulfo-beta-D-quinovose</name>
        <dbReference type="ChEBI" id="CHEBI:142957"/>
    </ligand>
</feature>
<feature type="binding site" evidence="1">
    <location>
        <position position="111"/>
    </location>
    <ligand>
        <name>6-sulfo-beta-D-quinovose</name>
        <dbReference type="ChEBI" id="CHEBI:142957"/>
    </ligand>
</feature>
<feature type="binding site" evidence="1">
    <location>
        <position position="172"/>
    </location>
    <ligand>
        <name>6-sulfo-beta-D-quinovose</name>
        <dbReference type="ChEBI" id="CHEBI:142957"/>
    </ligand>
</feature>
<feature type="binding site" evidence="1">
    <location>
        <position position="176"/>
    </location>
    <ligand>
        <name>6-sulfo-beta-D-quinovose</name>
        <dbReference type="ChEBI" id="CHEBI:142957"/>
    </ligand>
</feature>
<feature type="binding site" evidence="1">
    <location>
        <position position="238"/>
    </location>
    <ligand>
        <name>6-sulfo-beta-D-quinovose</name>
        <dbReference type="ChEBI" id="CHEBI:142957"/>
    </ligand>
</feature>
<feature type="binding site" evidence="1">
    <location>
        <position position="251"/>
    </location>
    <ligand>
        <name>6-sulfo-beta-D-quinovose</name>
        <dbReference type="ChEBI" id="CHEBI:142957"/>
    </ligand>
</feature>
<feature type="binding site" evidence="1">
    <location>
        <position position="362"/>
    </location>
    <ligand>
        <name>6-sulfo-beta-D-quinovose</name>
        <dbReference type="ChEBI" id="CHEBI:142957"/>
    </ligand>
</feature>
<feature type="binding site" evidence="1">
    <location>
        <position position="379"/>
    </location>
    <ligand>
        <name>6-sulfo-beta-D-quinovose</name>
        <dbReference type="ChEBI" id="CHEBI:142957"/>
    </ligand>
</feature>
<feature type="binding site" evidence="1">
    <location>
        <position position="383"/>
    </location>
    <ligand>
        <name>6-sulfo-beta-D-quinovose</name>
        <dbReference type="ChEBI" id="CHEBI:142957"/>
    </ligand>
</feature>
<feature type="mutagenesis site" description="Loss of activity." evidence="2">
    <original>R</original>
    <variation>A</variation>
    <location>
        <position position="55"/>
    </location>
</feature>
<feature type="mutagenesis site" description="Loss of activity." evidence="2">
    <original>H</original>
    <variation>A</variation>
    <location>
        <position position="176"/>
    </location>
</feature>
<feature type="mutagenesis site" description="Loss of activity." evidence="2">
    <original>H</original>
    <variation>A</variation>
    <location>
        <position position="248"/>
    </location>
</feature>
<feature type="mutagenesis site" description="Strong decrease in activity." evidence="2">
    <original>E</original>
    <variation>A</variation>
    <location>
        <position position="251"/>
    </location>
</feature>
<feature type="mutagenesis site" description="Loss of activity." evidence="2">
    <original>E</original>
    <variation>A</variation>
    <location>
        <position position="320"/>
    </location>
</feature>
<feature type="mutagenesis site" description="Loss of activity." evidence="2">
    <original>H</original>
    <variation>A</variation>
    <location>
        <position position="383"/>
    </location>
</feature>
<feature type="helix" evidence="10">
    <location>
        <begin position="7"/>
        <end position="24"/>
    </location>
</feature>
<feature type="helix" evidence="10">
    <location>
        <begin position="25"/>
        <end position="27"/>
    </location>
</feature>
<feature type="helix" evidence="10">
    <location>
        <begin position="44"/>
        <end position="46"/>
    </location>
</feature>
<feature type="helix" evidence="10">
    <location>
        <begin position="50"/>
        <end position="65"/>
    </location>
</feature>
<feature type="helix" evidence="10">
    <location>
        <begin position="71"/>
        <end position="82"/>
    </location>
</feature>
<feature type="turn" evidence="10">
    <location>
        <begin position="83"/>
        <end position="86"/>
    </location>
</feature>
<feature type="turn" evidence="10">
    <location>
        <begin position="89"/>
        <end position="91"/>
    </location>
</feature>
<feature type="strand" evidence="10">
    <location>
        <begin position="96"/>
        <end position="99"/>
    </location>
</feature>
<feature type="strand" evidence="10">
    <location>
        <begin position="102"/>
        <end position="105"/>
    </location>
</feature>
<feature type="helix" evidence="10">
    <location>
        <begin position="110"/>
        <end position="124"/>
    </location>
</feature>
<feature type="turn" evidence="10">
    <location>
        <begin position="125"/>
        <end position="127"/>
    </location>
</feature>
<feature type="helix" evidence="10">
    <location>
        <begin position="131"/>
        <end position="145"/>
    </location>
</feature>
<feature type="turn" evidence="10">
    <location>
        <begin position="149"/>
        <end position="152"/>
    </location>
</feature>
<feature type="helix" evidence="10">
    <location>
        <begin position="171"/>
        <end position="186"/>
    </location>
</feature>
<feature type="helix" evidence="10">
    <location>
        <begin position="191"/>
        <end position="204"/>
    </location>
</feature>
<feature type="turn" evidence="10">
    <location>
        <begin position="205"/>
        <end position="208"/>
    </location>
</feature>
<feature type="helix" evidence="10">
    <location>
        <begin position="209"/>
        <end position="212"/>
    </location>
</feature>
<feature type="turn" evidence="10">
    <location>
        <begin position="228"/>
        <end position="233"/>
    </location>
</feature>
<feature type="strand" evidence="10">
    <location>
        <begin position="242"/>
        <end position="244"/>
    </location>
</feature>
<feature type="helix" evidence="10">
    <location>
        <begin position="246"/>
        <end position="265"/>
    </location>
</feature>
<feature type="helix" evidence="10">
    <location>
        <begin position="273"/>
        <end position="289"/>
    </location>
</feature>
<feature type="strand" evidence="10">
    <location>
        <begin position="293"/>
        <end position="295"/>
    </location>
</feature>
<feature type="strand" evidence="10">
    <location>
        <begin position="308"/>
        <end position="310"/>
    </location>
</feature>
<feature type="helix" evidence="10">
    <location>
        <begin position="315"/>
        <end position="332"/>
    </location>
</feature>
<feature type="helix" evidence="10">
    <location>
        <begin position="336"/>
        <end position="351"/>
    </location>
</feature>
<feature type="turn" evidence="10">
    <location>
        <begin position="355"/>
        <end position="357"/>
    </location>
</feature>
<feature type="strand" evidence="10">
    <location>
        <begin position="358"/>
        <end position="360"/>
    </location>
</feature>
<feature type="strand" evidence="10">
    <location>
        <begin position="362"/>
        <end position="364"/>
    </location>
</feature>
<feature type="turn" evidence="10">
    <location>
        <begin position="382"/>
        <end position="384"/>
    </location>
</feature>
<feature type="helix" evidence="10">
    <location>
        <begin position="385"/>
        <end position="388"/>
    </location>
</feature>
<feature type="helix" evidence="10">
    <location>
        <begin position="390"/>
        <end position="392"/>
    </location>
</feature>
<feature type="strand" evidence="10">
    <location>
        <begin position="395"/>
        <end position="397"/>
    </location>
</feature>
<feature type="helix" evidence="10">
    <location>
        <begin position="399"/>
        <end position="404"/>
    </location>
</feature>
<feature type="turn" evidence="10">
    <location>
        <begin position="408"/>
        <end position="411"/>
    </location>
</feature>
<proteinExistence type="evidence at protein level"/>
<organism>
    <name type="scientific">Escherichia coli (strain K12)</name>
    <dbReference type="NCBI Taxonomy" id="83333"/>
    <lineage>
        <taxon>Bacteria</taxon>
        <taxon>Pseudomonadati</taxon>
        <taxon>Pseudomonadota</taxon>
        <taxon>Gammaproteobacteria</taxon>
        <taxon>Enterobacterales</taxon>
        <taxon>Enterobacteriaceae</taxon>
        <taxon>Escherichia</taxon>
    </lineage>
</organism>
<sequence>MKWFNTLSHNRWLEQETDRIFDFGKNSVVPTGFGWLGNKGQIKEEMGTHLWITARMLHVYSVAAAMGRPGAYSLVDHGIKAMNGALRDKKYGGWYACVNDEGVVDASKQGYQHFFALLGAASAVTTGHPEARKLLDYTIEIIEKYFWSEEEQMCLESWDEAFSKTEEYRGGNANMHAVEAFLIVYDVTHDKKWLDRAIRVASVIIHDVARNNHYRVNEHFDTQWNPLPDYNKDNPAHRFRAFGGTPGHWIEWGRLMLHIHAALEARCEQPPAWLLEDAKGLFNATVRDAWAPDGADGIVYTVDWEGKPVVRERVRWPIVEAMGTAYALYTVTGDRQYETWYQTWWEYCIKYLMDYENGSWWQELDADNKVTTKVWDGKQDIYHLLHCLVIPRIPLAPGMAPAVAAGLLDINAK</sequence>